<sequence length="488" mass="53452">MADPGGFLKYTHRKLPKRRPVPLRLRDWREVYEEFDNESLRQQATRCMDCGIPFCHNGCPLGNLIPEWNDLVRRGRWRDAIERLHATNNFPDFTGRLCPAPCEPACVLGINQDPVTIKQIELEIIDKAFDEGWVQPRPPRKLTGQTVAVVGSGPAGLAAAQQLTRAGHTVTVFEREDRIGGLLRYGIPEFKMEKRHLDRRLDQMRSEGTEFRPGVNVGVDISAEKLRADFDAVVLAGGATAWRELPIPGRELEGVHQAMEFLPWANRVQEGDDVLDEDGQPPITAKGKKVVIIGGGDTGADCLGTVHRQGAIAVHQFEIMPRPPDARAESTPWPTYPLMYRVSAAHEEGGERVFSVNTEAFVGTDGRVSALRAHEVTMLDGKFVKVEGSDFELEADLVLLAMGFVGPERAGLLTDLGVKFTERGNVARGDDFDTSVPGVFVAGDMGRGQSLIVWAIAEGRAAAAAVDRYLMGSSALPAPVKPTAAPLQ</sequence>
<organism>
    <name type="scientific">Mycobacterium tuberculosis (strain ATCC 25618 / H37Rv)</name>
    <dbReference type="NCBI Taxonomy" id="83332"/>
    <lineage>
        <taxon>Bacteria</taxon>
        <taxon>Bacillati</taxon>
        <taxon>Actinomycetota</taxon>
        <taxon>Actinomycetes</taxon>
        <taxon>Mycobacteriales</taxon>
        <taxon>Mycobacteriaceae</taxon>
        <taxon>Mycobacterium</taxon>
        <taxon>Mycobacterium tuberculosis complex</taxon>
    </lineage>
</organism>
<gene>
    <name type="primary">gltD</name>
    <name type="ordered locus">Rv3858c</name>
</gene>
<protein>
    <recommendedName>
        <fullName>Glutamate synthase [NADPH] small chain</fullName>
        <ecNumber>1.4.1.13</ecNumber>
    </recommendedName>
    <alternativeName>
        <fullName>Glutamate synthase subunit beta</fullName>
        <shortName>GLTS beta chain</shortName>
    </alternativeName>
</protein>
<comment type="catalytic activity">
    <reaction>
        <text>2 L-glutamate + NADP(+) = L-glutamine + 2-oxoglutarate + NADPH + H(+)</text>
        <dbReference type="Rhea" id="RHEA:15501"/>
        <dbReference type="ChEBI" id="CHEBI:15378"/>
        <dbReference type="ChEBI" id="CHEBI:16810"/>
        <dbReference type="ChEBI" id="CHEBI:29985"/>
        <dbReference type="ChEBI" id="CHEBI:57783"/>
        <dbReference type="ChEBI" id="CHEBI:58349"/>
        <dbReference type="ChEBI" id="CHEBI:58359"/>
        <dbReference type="EC" id="1.4.1.13"/>
    </reaction>
</comment>
<comment type="cofactor">
    <cofactor evidence="1">
        <name>[4Fe-4S] cluster</name>
        <dbReference type="ChEBI" id="CHEBI:49883"/>
    </cofactor>
    <text evidence="1">Binds 1 [4Fe-4S] cluster.</text>
</comment>
<comment type="pathway">
    <text>Amino-acid biosynthesis; L-glutamate biosynthesis via GLT pathway; L-glutamate from 2-oxoglutarate and L-glutamine (NADP(+) route): step 1/1.</text>
</comment>
<comment type="miscellaneous">
    <text>Was identified as a high-confidence drug target.</text>
</comment>
<proteinExistence type="evidence at protein level"/>
<accession>P9WN19</accession>
<accession>F2GDM0</accession>
<accession>L0TFG6</accession>
<accession>P96219</accession>
<accession>Q7D4Q4</accession>
<feature type="chain" id="PRO_0000419546" description="Glutamate synthase [NADPH] small chain">
    <location>
        <begin position="1"/>
        <end position="488"/>
    </location>
</feature>
<feature type="domain" description="4Fe-4S ferredoxin-type">
    <location>
        <begin position="38"/>
        <end position="69"/>
    </location>
</feature>
<dbReference type="EC" id="1.4.1.13"/>
<dbReference type="EMBL" id="AL123456">
    <property type="protein sequence ID" value="CCP46687.1"/>
    <property type="molecule type" value="Genomic_DNA"/>
</dbReference>
<dbReference type="PIR" id="G70655">
    <property type="entry name" value="G70655"/>
</dbReference>
<dbReference type="RefSeq" id="NP_218375.1">
    <property type="nucleotide sequence ID" value="NC_000962.3"/>
</dbReference>
<dbReference type="RefSeq" id="WP_003899732.1">
    <property type="nucleotide sequence ID" value="NZ_NVQJ01000057.1"/>
</dbReference>
<dbReference type="SMR" id="P9WN19"/>
<dbReference type="FunCoup" id="P9WN19">
    <property type="interactions" value="134"/>
</dbReference>
<dbReference type="STRING" id="83332.Rv3858c"/>
<dbReference type="PaxDb" id="83332-Rv3858c"/>
<dbReference type="DNASU" id="886196"/>
<dbReference type="GeneID" id="886196"/>
<dbReference type="KEGG" id="mtu:Rv3858c"/>
<dbReference type="KEGG" id="mtv:RVBD_3858c"/>
<dbReference type="TubercuList" id="Rv3858c"/>
<dbReference type="eggNOG" id="COG0493">
    <property type="taxonomic scope" value="Bacteria"/>
</dbReference>
<dbReference type="InParanoid" id="P9WN19"/>
<dbReference type="OrthoDB" id="9803192at2"/>
<dbReference type="PhylomeDB" id="P9WN19"/>
<dbReference type="UniPathway" id="UPA00634">
    <property type="reaction ID" value="UER00689"/>
</dbReference>
<dbReference type="Proteomes" id="UP000001584">
    <property type="component" value="Chromosome"/>
</dbReference>
<dbReference type="GO" id="GO:0005829">
    <property type="term" value="C:cytosol"/>
    <property type="evidence" value="ECO:0007005"/>
    <property type="project" value="MTBBASE"/>
</dbReference>
<dbReference type="GO" id="GO:0005886">
    <property type="term" value="C:plasma membrane"/>
    <property type="evidence" value="ECO:0007005"/>
    <property type="project" value="MTBBASE"/>
</dbReference>
<dbReference type="GO" id="GO:0051539">
    <property type="term" value="F:4 iron, 4 sulfur cluster binding"/>
    <property type="evidence" value="ECO:0007669"/>
    <property type="project" value="UniProtKB-KW"/>
</dbReference>
<dbReference type="GO" id="GO:0004355">
    <property type="term" value="F:glutamate synthase (NADPH) activity"/>
    <property type="evidence" value="ECO:0007669"/>
    <property type="project" value="UniProtKB-EC"/>
</dbReference>
<dbReference type="GO" id="GO:0046872">
    <property type="term" value="F:metal ion binding"/>
    <property type="evidence" value="ECO:0007669"/>
    <property type="project" value="UniProtKB-KW"/>
</dbReference>
<dbReference type="GO" id="GO:0016639">
    <property type="term" value="F:oxidoreductase activity, acting on the CH-NH2 group of donors, NAD or NADP as acceptor"/>
    <property type="evidence" value="ECO:0007669"/>
    <property type="project" value="InterPro"/>
</dbReference>
<dbReference type="GO" id="GO:0097054">
    <property type="term" value="P:L-glutamate biosynthetic process"/>
    <property type="evidence" value="ECO:0007669"/>
    <property type="project" value="UniProtKB-UniPathway"/>
</dbReference>
<dbReference type="FunFam" id="3.50.50.60:FF:000068">
    <property type="entry name" value="Glutamate synthase small subunit"/>
    <property type="match status" value="1"/>
</dbReference>
<dbReference type="FunFam" id="3.50.50.60:FF:000124">
    <property type="entry name" value="Glutamate synthase small subunit"/>
    <property type="match status" value="1"/>
</dbReference>
<dbReference type="FunFam" id="1.10.1060.10:FF:000004">
    <property type="entry name" value="Glutamate synthase, small subunit"/>
    <property type="match status" value="1"/>
</dbReference>
<dbReference type="Gene3D" id="1.10.1060.10">
    <property type="entry name" value="Alpha-helical ferredoxin"/>
    <property type="match status" value="1"/>
</dbReference>
<dbReference type="Gene3D" id="3.50.50.60">
    <property type="entry name" value="FAD/NAD(P)-binding domain"/>
    <property type="match status" value="2"/>
</dbReference>
<dbReference type="InterPro" id="IPR028261">
    <property type="entry name" value="DPD_II"/>
</dbReference>
<dbReference type="InterPro" id="IPR036188">
    <property type="entry name" value="FAD/NAD-bd_sf"/>
</dbReference>
<dbReference type="InterPro" id="IPR023753">
    <property type="entry name" value="FAD/NAD-binding_dom"/>
</dbReference>
<dbReference type="InterPro" id="IPR006005">
    <property type="entry name" value="Glut_synth_ssu1"/>
</dbReference>
<dbReference type="InterPro" id="IPR051394">
    <property type="entry name" value="Glutamate_Synthase"/>
</dbReference>
<dbReference type="InterPro" id="IPR009051">
    <property type="entry name" value="Helical_ferredxn"/>
</dbReference>
<dbReference type="NCBIfam" id="TIGR01317">
    <property type="entry name" value="GOGAT_sm_gam"/>
    <property type="match status" value="1"/>
</dbReference>
<dbReference type="PANTHER" id="PTHR43100">
    <property type="entry name" value="GLUTAMATE SYNTHASE [NADPH] SMALL CHAIN"/>
    <property type="match status" value="1"/>
</dbReference>
<dbReference type="PANTHER" id="PTHR43100:SF1">
    <property type="entry name" value="GLUTAMATE SYNTHASE [NADPH] SMALL CHAIN"/>
    <property type="match status" value="1"/>
</dbReference>
<dbReference type="Pfam" id="PF14691">
    <property type="entry name" value="Fer4_20"/>
    <property type="match status" value="1"/>
</dbReference>
<dbReference type="Pfam" id="PF07992">
    <property type="entry name" value="Pyr_redox_2"/>
    <property type="match status" value="1"/>
</dbReference>
<dbReference type="PRINTS" id="PR00419">
    <property type="entry name" value="ADXRDTASE"/>
</dbReference>
<dbReference type="SUPFAM" id="SSF46548">
    <property type="entry name" value="alpha-helical ferredoxin"/>
    <property type="match status" value="1"/>
</dbReference>
<dbReference type="SUPFAM" id="SSF51971">
    <property type="entry name" value="Nucleotide-binding domain"/>
    <property type="match status" value="2"/>
</dbReference>
<reference key="1">
    <citation type="journal article" date="1998" name="Nature">
        <title>Deciphering the biology of Mycobacterium tuberculosis from the complete genome sequence.</title>
        <authorList>
            <person name="Cole S.T."/>
            <person name="Brosch R."/>
            <person name="Parkhill J."/>
            <person name="Garnier T."/>
            <person name="Churcher C.M."/>
            <person name="Harris D.E."/>
            <person name="Gordon S.V."/>
            <person name="Eiglmeier K."/>
            <person name="Gas S."/>
            <person name="Barry C.E. III"/>
            <person name="Tekaia F."/>
            <person name="Badcock K."/>
            <person name="Basham D."/>
            <person name="Brown D."/>
            <person name="Chillingworth T."/>
            <person name="Connor R."/>
            <person name="Davies R.M."/>
            <person name="Devlin K."/>
            <person name="Feltwell T."/>
            <person name="Gentles S."/>
            <person name="Hamlin N."/>
            <person name="Holroyd S."/>
            <person name="Hornsby T."/>
            <person name="Jagels K."/>
            <person name="Krogh A."/>
            <person name="McLean J."/>
            <person name="Moule S."/>
            <person name="Murphy L.D."/>
            <person name="Oliver S."/>
            <person name="Osborne J."/>
            <person name="Quail M.A."/>
            <person name="Rajandream M.A."/>
            <person name="Rogers J."/>
            <person name="Rutter S."/>
            <person name="Seeger K."/>
            <person name="Skelton S."/>
            <person name="Squares S."/>
            <person name="Squares R."/>
            <person name="Sulston J.E."/>
            <person name="Taylor K."/>
            <person name="Whitehead S."/>
            <person name="Barrell B.G."/>
        </authorList>
    </citation>
    <scope>NUCLEOTIDE SEQUENCE [LARGE SCALE GENOMIC DNA]</scope>
    <source>
        <strain>ATCC 25618 / H37Rv</strain>
    </source>
</reference>
<reference key="2">
    <citation type="journal article" date="2008" name="BMC Syst. Biol.">
        <title>targetTB: a target identification pipeline for Mycobacterium tuberculosis through an interactome, reactome and genome-scale structural analysis.</title>
        <authorList>
            <person name="Raman K."/>
            <person name="Yeturu K."/>
            <person name="Chandra N."/>
        </authorList>
    </citation>
    <scope>IDENTIFICATION AS A DRUG TARGET [LARGE SCALE ANALYSIS]</scope>
</reference>
<reference key="3">
    <citation type="journal article" date="2011" name="Mol. Cell. Proteomics">
        <title>Proteogenomic analysis of Mycobacterium tuberculosis by high resolution mass spectrometry.</title>
        <authorList>
            <person name="Kelkar D.S."/>
            <person name="Kumar D."/>
            <person name="Kumar P."/>
            <person name="Balakrishnan L."/>
            <person name="Muthusamy B."/>
            <person name="Yadav A.K."/>
            <person name="Shrivastava P."/>
            <person name="Marimuthu A."/>
            <person name="Anand S."/>
            <person name="Sundaram H."/>
            <person name="Kingsbury R."/>
            <person name="Harsha H.C."/>
            <person name="Nair B."/>
            <person name="Prasad T.S."/>
            <person name="Chauhan D.S."/>
            <person name="Katoch K."/>
            <person name="Katoch V.M."/>
            <person name="Kumar P."/>
            <person name="Chaerkady R."/>
            <person name="Ramachandran S."/>
            <person name="Dash D."/>
            <person name="Pandey A."/>
        </authorList>
    </citation>
    <scope>IDENTIFICATION BY MASS SPECTROMETRY [LARGE SCALE ANALYSIS]</scope>
    <source>
        <strain>ATCC 25618 / H37Rv</strain>
    </source>
</reference>
<evidence type="ECO:0000250" key="1"/>
<keyword id="KW-0004">4Fe-4S</keyword>
<keyword id="KW-0028">Amino-acid biosynthesis</keyword>
<keyword id="KW-0314">Glutamate biosynthesis</keyword>
<keyword id="KW-0408">Iron</keyword>
<keyword id="KW-0411">Iron-sulfur</keyword>
<keyword id="KW-0479">Metal-binding</keyword>
<keyword id="KW-0521">NADP</keyword>
<keyword id="KW-0560">Oxidoreductase</keyword>
<keyword id="KW-1185">Reference proteome</keyword>
<name>GLTD_MYCTU</name>